<protein>
    <recommendedName>
        <fullName>Minor curlin subunit</fullName>
    </recommendedName>
</protein>
<evidence type="ECO:0000255" key="1"/>
<evidence type="ECO:0000269" key="2">
    <source>
    </source>
</evidence>
<evidence type="ECO:0000269" key="3">
    <source>
    </source>
</evidence>
<evidence type="ECO:0000305" key="4"/>
<evidence type="ECO:0000305" key="5">
    <source>
    </source>
</evidence>
<feature type="signal peptide" evidence="1">
    <location>
        <begin position="1"/>
        <end position="21"/>
    </location>
</feature>
<feature type="chain" id="PRO_0000006374" description="Minor curlin subunit">
    <location>
        <begin position="22"/>
        <end position="151"/>
    </location>
</feature>
<dbReference type="EMBL" id="X90754">
    <property type="protein sequence ID" value="CAA62281.1"/>
    <property type="molecule type" value="Genomic_DNA"/>
</dbReference>
<dbReference type="EMBL" id="U00096">
    <property type="protein sequence ID" value="AAC74125.1"/>
    <property type="molecule type" value="Genomic_DNA"/>
</dbReference>
<dbReference type="EMBL" id="AP009048">
    <property type="protein sequence ID" value="BAA35831.1"/>
    <property type="molecule type" value="Genomic_DNA"/>
</dbReference>
<dbReference type="PIR" id="S70787">
    <property type="entry name" value="S70787"/>
</dbReference>
<dbReference type="RefSeq" id="NP_415559.1">
    <property type="nucleotide sequence ID" value="NC_000913.3"/>
</dbReference>
<dbReference type="RefSeq" id="WP_000791650.1">
    <property type="nucleotide sequence ID" value="NZ_STEB01000016.1"/>
</dbReference>
<dbReference type="SMR" id="P0ABK7"/>
<dbReference type="BioGRID" id="4259358">
    <property type="interactions" value="11"/>
</dbReference>
<dbReference type="DIP" id="DIP-46504N"/>
<dbReference type="FunCoup" id="P0ABK7">
    <property type="interactions" value="43"/>
</dbReference>
<dbReference type="IntAct" id="P0ABK7">
    <property type="interactions" value="1"/>
</dbReference>
<dbReference type="STRING" id="511145.b1041"/>
<dbReference type="PaxDb" id="511145-b1041"/>
<dbReference type="EnsemblBacteria" id="AAC74125">
    <property type="protein sequence ID" value="AAC74125"/>
    <property type="gene ID" value="b1041"/>
</dbReference>
<dbReference type="GeneID" id="75203629"/>
<dbReference type="GeneID" id="947391"/>
<dbReference type="KEGG" id="ecj:JW1024"/>
<dbReference type="KEGG" id="eco:b1041"/>
<dbReference type="KEGG" id="ecoc:C3026_06340"/>
<dbReference type="PATRIC" id="fig|1411691.4.peg.1228"/>
<dbReference type="EchoBASE" id="EB2505"/>
<dbReference type="eggNOG" id="ENOG5033BC9">
    <property type="taxonomic scope" value="Bacteria"/>
</dbReference>
<dbReference type="HOGENOM" id="CLU_116264_1_0_6"/>
<dbReference type="InParanoid" id="P0ABK7"/>
<dbReference type="OMA" id="NFGNTAY"/>
<dbReference type="OrthoDB" id="6609492at2"/>
<dbReference type="PhylomeDB" id="P0ABK7"/>
<dbReference type="BioCyc" id="EcoCyc:G6547-MONOMER"/>
<dbReference type="PRO" id="PR:P0ABK7"/>
<dbReference type="Proteomes" id="UP000000625">
    <property type="component" value="Chromosome"/>
</dbReference>
<dbReference type="GO" id="GO:0009279">
    <property type="term" value="C:cell outer membrane"/>
    <property type="evidence" value="ECO:0000314"/>
    <property type="project" value="EcoCyc"/>
</dbReference>
<dbReference type="GO" id="GO:0009289">
    <property type="term" value="C:pilus"/>
    <property type="evidence" value="ECO:0000314"/>
    <property type="project" value="EcoCyc"/>
</dbReference>
<dbReference type="GO" id="GO:0042802">
    <property type="term" value="F:identical protein binding"/>
    <property type="evidence" value="ECO:0000353"/>
    <property type="project" value="IntAct"/>
</dbReference>
<dbReference type="GO" id="GO:1990000">
    <property type="term" value="P:amyloid fibril formation"/>
    <property type="evidence" value="ECO:0000314"/>
    <property type="project" value="EcoCyc"/>
</dbReference>
<dbReference type="GO" id="GO:0007155">
    <property type="term" value="P:cell adhesion"/>
    <property type="evidence" value="ECO:0007669"/>
    <property type="project" value="InterPro"/>
</dbReference>
<dbReference type="GO" id="GO:0098775">
    <property type="term" value="P:curli assembly"/>
    <property type="evidence" value="ECO:0000315"/>
    <property type="project" value="EcoCyc"/>
</dbReference>
<dbReference type="GO" id="GO:1905906">
    <property type="term" value="P:regulation of amyloid fibril formation"/>
    <property type="evidence" value="ECO:0000314"/>
    <property type="project" value="DisProt"/>
</dbReference>
<dbReference type="GO" id="GO:0044010">
    <property type="term" value="P:single-species biofilm formation"/>
    <property type="evidence" value="ECO:0000315"/>
    <property type="project" value="EcoCyc"/>
</dbReference>
<dbReference type="InterPro" id="IPR009742">
    <property type="entry name" value="Curlin_rpt"/>
</dbReference>
<dbReference type="NCBIfam" id="NF007506">
    <property type="entry name" value="PRK10101.1"/>
    <property type="match status" value="1"/>
</dbReference>
<dbReference type="Pfam" id="PF07012">
    <property type="entry name" value="Curlin_rpt"/>
    <property type="match status" value="3"/>
</dbReference>
<sequence>MKNKLLFMMLTILGAPGIAAAAGYDLANSEYNFAVNELSKSSFNQAAIIGQAGTNNSAQLRQGGSKLLAVVAQEGSSNRAKIDQTGDYNLAYIDQAGSANDASISQGAYGNTAMIIQKGSGNKANITQYGTQKTAIVVQRQSQMAIRVTQR</sequence>
<comment type="function">
    <text evidence="3">Curlin is the structural subunit of the curli fimbriae. Curli are coiled surface structures that assemble preferentially at growth temperatures below 37 degrees Celsius. Curli can bind to fibronectin. The minor subunit is the nucleation component of curlin monomers. Coexpression of cellulose and thin aggregative fimbriae (curli fimbrae or fibers) leads to a hydrophobic network with tightly packed cells embedded in a highly inert matrix that confers cohesion, elasticity and tissue-like properties to colonies (PubMed:24097954).</text>
</comment>
<comment type="interaction">
    <interactant intactId="EBI-15647688">
        <id>P0ABK7</id>
    </interactant>
    <interactant intactId="EBI-15647688">
        <id>P0ABK7</id>
        <label>csgB</label>
    </interactant>
    <organismsDiffer>false</organismsDiffer>
    <experiments>3</experiments>
</comment>
<comment type="subcellular location">
    <subcellularLocation>
        <location>Fimbrium</location>
    </subcellularLocation>
    <text>Part of the curli surface structure.</text>
</comment>
<comment type="induction">
    <text evidence="2">Under control of the CsgD transcription factor, part of the csgBAC/ymdA operon.</text>
</comment>
<comment type="disruption phenotype">
    <text evidence="3">When disrupted in a cellulose-synthesizing strain (with a functional bcsQ gene), cellulose is made but colony morphology indicates no curli are made.</text>
</comment>
<comment type="miscellaneous">
    <text evidence="5">Cellulose production is abolished in E.coli K12 / MG1655 and W3110 due to a premature stop codon in bcsQ (PubMed:24097954).</text>
</comment>
<comment type="similarity">
    <text evidence="4">Belongs to the CsgA/CsgB family.</text>
</comment>
<accession>P0ABK7</accession>
<accession>P39828</accession>
<organism>
    <name type="scientific">Escherichia coli (strain K12)</name>
    <dbReference type="NCBI Taxonomy" id="83333"/>
    <lineage>
        <taxon>Bacteria</taxon>
        <taxon>Pseudomonadati</taxon>
        <taxon>Pseudomonadota</taxon>
        <taxon>Gammaproteobacteria</taxon>
        <taxon>Enterobacterales</taxon>
        <taxon>Enterobacteriaceae</taxon>
        <taxon>Escherichia</taxon>
    </lineage>
</organism>
<reference key="1">
    <citation type="journal article" date="1995" name="Mol. Microbiol.">
        <title>Expression of two csg operons is required for production of fibronectin- and congo red-binding curli polymers in Escherichia coli K-12.</title>
        <authorList>
            <person name="Hammar M."/>
            <person name="Arnqvist A."/>
            <person name="Bian Z."/>
            <person name="Olsen A."/>
            <person name="Normark S."/>
        </authorList>
    </citation>
    <scope>NUCLEOTIDE SEQUENCE [GENOMIC DNA]</scope>
    <source>
        <strain>K12 / MC4100 / ATCC 35695 / DSM 6574</strain>
    </source>
</reference>
<reference key="2">
    <citation type="journal article" date="1996" name="DNA Res.">
        <title>A 718-kb DNA sequence of the Escherichia coli K-12 genome corresponding to the 12.7-28.0 min region on the linkage map.</title>
        <authorList>
            <person name="Oshima T."/>
            <person name="Aiba H."/>
            <person name="Baba T."/>
            <person name="Fujita K."/>
            <person name="Hayashi K."/>
            <person name="Honjo A."/>
            <person name="Ikemoto K."/>
            <person name="Inada T."/>
            <person name="Itoh T."/>
            <person name="Kajihara M."/>
            <person name="Kanai K."/>
            <person name="Kashimoto K."/>
            <person name="Kimura S."/>
            <person name="Kitagawa M."/>
            <person name="Makino K."/>
            <person name="Masuda S."/>
            <person name="Miki T."/>
            <person name="Mizobuchi K."/>
            <person name="Mori H."/>
            <person name="Motomura K."/>
            <person name="Nakamura Y."/>
            <person name="Nashimoto H."/>
            <person name="Nishio Y."/>
            <person name="Saito N."/>
            <person name="Sampei G."/>
            <person name="Seki Y."/>
            <person name="Tagami H."/>
            <person name="Takemoto K."/>
            <person name="Wada C."/>
            <person name="Yamamoto Y."/>
            <person name="Yano M."/>
            <person name="Horiuchi T."/>
        </authorList>
    </citation>
    <scope>NUCLEOTIDE SEQUENCE [LARGE SCALE GENOMIC DNA]</scope>
    <source>
        <strain>K12 / W3110 / ATCC 27325 / DSM 5911</strain>
    </source>
</reference>
<reference key="3">
    <citation type="journal article" date="1997" name="Science">
        <title>The complete genome sequence of Escherichia coli K-12.</title>
        <authorList>
            <person name="Blattner F.R."/>
            <person name="Plunkett G. III"/>
            <person name="Bloch C.A."/>
            <person name="Perna N.T."/>
            <person name="Burland V."/>
            <person name="Riley M."/>
            <person name="Collado-Vides J."/>
            <person name="Glasner J.D."/>
            <person name="Rode C.K."/>
            <person name="Mayhew G.F."/>
            <person name="Gregor J."/>
            <person name="Davis N.W."/>
            <person name="Kirkpatrick H.A."/>
            <person name="Goeden M.A."/>
            <person name="Rose D.J."/>
            <person name="Mau B."/>
            <person name="Shao Y."/>
        </authorList>
    </citation>
    <scope>NUCLEOTIDE SEQUENCE [LARGE SCALE GENOMIC DNA]</scope>
    <source>
        <strain>K12 / MG1655 / ATCC 47076</strain>
    </source>
</reference>
<reference key="4">
    <citation type="journal article" date="2006" name="Mol. Syst. Biol.">
        <title>Highly accurate genome sequences of Escherichia coli K-12 strains MG1655 and W3110.</title>
        <authorList>
            <person name="Hayashi K."/>
            <person name="Morooka N."/>
            <person name="Yamamoto Y."/>
            <person name="Fujita K."/>
            <person name="Isono K."/>
            <person name="Choi S."/>
            <person name="Ohtsubo E."/>
            <person name="Baba T."/>
            <person name="Wanner B.L."/>
            <person name="Mori H."/>
            <person name="Horiuchi T."/>
        </authorList>
    </citation>
    <scope>NUCLEOTIDE SEQUENCE [LARGE SCALE GENOMIC DNA]</scope>
    <source>
        <strain>K12 / W3110 / ATCC 27325 / DSM 5911</strain>
    </source>
</reference>
<reference key="5">
    <citation type="journal article" date="1994" name="Mol. Microbiol.">
        <title>Sigma S-dependent growth-phase induction of the csgBA promoter in Escherichia coli can be achieved in vivo by sigma 70 in the absence of the nucleoid-associated protein H-NS.</title>
        <authorList>
            <person name="Arnqvist A."/>
            <person name="Olsen A."/>
            <person name="Normark S."/>
        </authorList>
    </citation>
    <scope>NUCLEOTIDE SEQUENCE [GENOMIC DNA] OF 1-21</scope>
    <source>
        <strain>K12</strain>
    </source>
</reference>
<reference key="6">
    <citation type="journal article" date="2006" name="Mol. Microbiol.">
        <title>Cyclic-di-GMP-mediated signalling within the sigma network of Escherichia coli.</title>
        <authorList>
            <person name="Weber H."/>
            <person name="Pesavento C."/>
            <person name="Possling A."/>
            <person name="Tischendorf G."/>
            <person name="Hengge R."/>
        </authorList>
    </citation>
    <scope>INDUCTION</scope>
    <scope>OPERON STRUCTURE</scope>
    <source>
        <strain>K12 / MC4100</strain>
    </source>
</reference>
<reference key="7">
    <citation type="journal article" date="2013" name="J. Bacteriol.">
        <title>Cellulose as an architectural element in spatially structured Escherichia coli biofilms.</title>
        <authorList>
            <person name="Serra D.O."/>
            <person name="Richter A.M."/>
            <person name="Hengge R."/>
        </authorList>
    </citation>
    <scope>FUNCTION</scope>
    <scope>DISRUPTION PHENOTYPE</scope>
    <source>
        <strain>K12 / W3110 / ATCC 27325 / DSM 5911</strain>
    </source>
</reference>
<name>CSGB_ECOLI</name>
<gene>
    <name type="primary">csgB</name>
    <name type="ordered locus">b1041</name>
    <name type="ordered locus">JW1024</name>
</gene>
<proteinExistence type="evidence at protein level"/>
<keyword id="KW-0281">Fimbrium</keyword>
<keyword id="KW-1185">Reference proteome</keyword>
<keyword id="KW-0732">Signal</keyword>